<evidence type="ECO:0000255" key="1">
    <source>
        <dbReference type="HAMAP-Rule" id="MF_01556"/>
    </source>
</evidence>
<sequence>MKIAIGCDHIVTDTKIAVSDFLKAKGYEILDVGTYDFTRTHYPIFGKKVGEAVMSNQADLGICICGTGVGITNAVNKVPGIRSALVRDMTTALYAKEELNANVIGFGGKITGEFLICDIAAAFIEAHYHPTEDNEQLIEKINQVEKQHPEQQDAHFFDEFLDKWQRGVYHD</sequence>
<comment type="catalytic activity">
    <reaction evidence="1">
        <text>aldehydo-D-galactose 6-phosphate = keto-D-tagatose 6-phosphate</text>
        <dbReference type="Rhea" id="RHEA:13033"/>
        <dbReference type="ChEBI" id="CHEBI:58255"/>
        <dbReference type="ChEBI" id="CHEBI:134283"/>
        <dbReference type="EC" id="5.3.1.26"/>
    </reaction>
</comment>
<comment type="pathway">
    <text evidence="1">Carbohydrate metabolism; D-galactose 6-phosphate degradation; D-tagatose 6-phosphate from D-galactose 6-phosphate: step 1/1.</text>
</comment>
<comment type="subunit">
    <text evidence="1">Heteromultimeric protein consisting of LacA and LacB.</text>
</comment>
<comment type="similarity">
    <text evidence="1">Belongs to the LacAB/RpiB family.</text>
</comment>
<name>LACB_ENTFA</name>
<gene>
    <name evidence="1" type="primary">lacB</name>
    <name type="ordered locus">EF_1834</name>
</gene>
<organism>
    <name type="scientific">Enterococcus faecalis (strain ATCC 700802 / V583)</name>
    <dbReference type="NCBI Taxonomy" id="226185"/>
    <lineage>
        <taxon>Bacteria</taxon>
        <taxon>Bacillati</taxon>
        <taxon>Bacillota</taxon>
        <taxon>Bacilli</taxon>
        <taxon>Lactobacillales</taxon>
        <taxon>Enterococcaceae</taxon>
        <taxon>Enterococcus</taxon>
    </lineage>
</organism>
<proteinExistence type="inferred from homology"/>
<protein>
    <recommendedName>
        <fullName evidence="1">Galactose-6-phosphate isomerase subunit LacB</fullName>
        <ecNumber evidence="1">5.3.1.26</ecNumber>
    </recommendedName>
</protein>
<feature type="chain" id="PRO_0000208134" description="Galactose-6-phosphate isomerase subunit LacB">
    <location>
        <begin position="1"/>
        <end position="171"/>
    </location>
</feature>
<keyword id="KW-0413">Isomerase</keyword>
<keyword id="KW-0423">Lactose metabolism</keyword>
<keyword id="KW-1185">Reference proteome</keyword>
<reference key="1">
    <citation type="journal article" date="2003" name="Science">
        <title>Role of mobile DNA in the evolution of vancomycin-resistant Enterococcus faecalis.</title>
        <authorList>
            <person name="Paulsen I.T."/>
            <person name="Banerjei L."/>
            <person name="Myers G.S.A."/>
            <person name="Nelson K.E."/>
            <person name="Seshadri R."/>
            <person name="Read T.D."/>
            <person name="Fouts D.E."/>
            <person name="Eisen J.A."/>
            <person name="Gill S.R."/>
            <person name="Heidelberg J.F."/>
            <person name="Tettelin H."/>
            <person name="Dodson R.J."/>
            <person name="Umayam L.A."/>
            <person name="Brinkac L.M."/>
            <person name="Beanan M.J."/>
            <person name="Daugherty S.C."/>
            <person name="DeBoy R.T."/>
            <person name="Durkin S.A."/>
            <person name="Kolonay J.F."/>
            <person name="Madupu R."/>
            <person name="Nelson W.C."/>
            <person name="Vamathevan J.J."/>
            <person name="Tran B."/>
            <person name="Upton J."/>
            <person name="Hansen T."/>
            <person name="Shetty J."/>
            <person name="Khouri H.M."/>
            <person name="Utterback T.R."/>
            <person name="Radune D."/>
            <person name="Ketchum K.A."/>
            <person name="Dougherty B.A."/>
            <person name="Fraser C.M."/>
        </authorList>
    </citation>
    <scope>NUCLEOTIDE SEQUENCE [LARGE SCALE GENOMIC DNA]</scope>
    <source>
        <strain>ATCC 700802 / V583</strain>
    </source>
</reference>
<accession>Q833U4</accession>
<dbReference type="EC" id="5.3.1.26" evidence="1"/>
<dbReference type="EMBL" id="AE016830">
    <property type="protein sequence ID" value="AAO81599.1"/>
    <property type="molecule type" value="Genomic_DNA"/>
</dbReference>
<dbReference type="RefSeq" id="NP_815529.1">
    <property type="nucleotide sequence ID" value="NC_004668.1"/>
</dbReference>
<dbReference type="RefSeq" id="WP_002369240.1">
    <property type="nucleotide sequence ID" value="NZ_KE136528.1"/>
</dbReference>
<dbReference type="SMR" id="Q833U4"/>
<dbReference type="STRING" id="226185.EF_1834"/>
<dbReference type="EnsemblBacteria" id="AAO81599">
    <property type="protein sequence ID" value="AAO81599"/>
    <property type="gene ID" value="EF_1834"/>
</dbReference>
<dbReference type="KEGG" id="efa:EF1834"/>
<dbReference type="PATRIC" id="fig|226185.45.peg.1686"/>
<dbReference type="eggNOG" id="COG0698">
    <property type="taxonomic scope" value="Bacteria"/>
</dbReference>
<dbReference type="HOGENOM" id="CLU_091396_2_0_9"/>
<dbReference type="UniPathway" id="UPA00702">
    <property type="reaction ID" value="UER00714"/>
</dbReference>
<dbReference type="Proteomes" id="UP000001415">
    <property type="component" value="Chromosome"/>
</dbReference>
<dbReference type="GO" id="GO:0050044">
    <property type="term" value="F:galactose-6-phosphate isomerase activity"/>
    <property type="evidence" value="ECO:0007669"/>
    <property type="project" value="UniProtKB-UniRule"/>
</dbReference>
<dbReference type="GO" id="GO:0004751">
    <property type="term" value="F:ribose-5-phosphate isomerase activity"/>
    <property type="evidence" value="ECO:0007669"/>
    <property type="project" value="TreeGrafter"/>
</dbReference>
<dbReference type="GO" id="GO:0019316">
    <property type="term" value="P:D-allose catabolic process"/>
    <property type="evidence" value="ECO:0007669"/>
    <property type="project" value="TreeGrafter"/>
</dbReference>
<dbReference type="GO" id="GO:0019388">
    <property type="term" value="P:galactose catabolic process"/>
    <property type="evidence" value="ECO:0007669"/>
    <property type="project" value="UniProtKB-UniPathway"/>
</dbReference>
<dbReference type="GO" id="GO:0019512">
    <property type="term" value="P:lactose catabolic process via tagatose-6-phosphate"/>
    <property type="evidence" value="ECO:0007669"/>
    <property type="project" value="UniProtKB-UniRule"/>
</dbReference>
<dbReference type="GO" id="GO:0009052">
    <property type="term" value="P:pentose-phosphate shunt, non-oxidative branch"/>
    <property type="evidence" value="ECO:0007669"/>
    <property type="project" value="TreeGrafter"/>
</dbReference>
<dbReference type="Gene3D" id="3.40.1400.10">
    <property type="entry name" value="Sugar-phosphate isomerase, RpiB/LacA/LacB"/>
    <property type="match status" value="1"/>
</dbReference>
<dbReference type="HAMAP" id="MF_01556">
    <property type="entry name" value="LacB"/>
    <property type="match status" value="1"/>
</dbReference>
<dbReference type="InterPro" id="IPR004784">
    <property type="entry name" value="LacB"/>
</dbReference>
<dbReference type="InterPro" id="IPR003500">
    <property type="entry name" value="RpiB_LacA_LacB"/>
</dbReference>
<dbReference type="InterPro" id="IPR036569">
    <property type="entry name" value="RpiB_LacA_LacB_sf"/>
</dbReference>
<dbReference type="NCBIfam" id="TIGR01119">
    <property type="entry name" value="lacB"/>
    <property type="match status" value="1"/>
</dbReference>
<dbReference type="NCBIfam" id="NF004051">
    <property type="entry name" value="PRK05571.1"/>
    <property type="match status" value="1"/>
</dbReference>
<dbReference type="NCBIfam" id="NF006381">
    <property type="entry name" value="PRK08622.1"/>
    <property type="match status" value="1"/>
</dbReference>
<dbReference type="NCBIfam" id="TIGR00689">
    <property type="entry name" value="rpiB_lacA_lacB"/>
    <property type="match status" value="1"/>
</dbReference>
<dbReference type="PANTHER" id="PTHR30345:SF0">
    <property type="entry name" value="DNA DAMAGE-REPAIR_TOLERATION PROTEIN DRT102"/>
    <property type="match status" value="1"/>
</dbReference>
<dbReference type="PANTHER" id="PTHR30345">
    <property type="entry name" value="RIBOSE-5-PHOSPHATE ISOMERASE B"/>
    <property type="match status" value="1"/>
</dbReference>
<dbReference type="Pfam" id="PF02502">
    <property type="entry name" value="LacAB_rpiB"/>
    <property type="match status" value="1"/>
</dbReference>
<dbReference type="PIRSF" id="PIRSF005384">
    <property type="entry name" value="RpiB_LacA_B"/>
    <property type="match status" value="1"/>
</dbReference>
<dbReference type="SUPFAM" id="SSF89623">
    <property type="entry name" value="Ribose/Galactose isomerase RpiB/AlsB"/>
    <property type="match status" value="1"/>
</dbReference>